<sequence>MPQHDQLHRYLFENFAVRGELVTVSETLQQILENHDYPQPVKNVLAELLVATSLLTATLKFDGDITVQLQGDGPMNLAVINGNNNQQMRGVARVQGEIPENADLKTLVGNGYVVITITPSEGERYQGVVGLEGDTLAACLEDYFMRSEQLPTRLFIRTGDVDGKPAAGGMLLQVMPAQNAQQDDFDHLATLTETIKTEELLTLPANEVLWRLYHEEEVTVYDPQDVEFKCTCSRERCADALKTLPDEEVDSILAEDGEIDMHCDYCGNHYLFNAMDIAEIRNNASPADPQVH</sequence>
<evidence type="ECO:0000255" key="1">
    <source>
        <dbReference type="HAMAP-Rule" id="MF_00117"/>
    </source>
</evidence>
<evidence type="ECO:0000305" key="2"/>
<name>HSLO_ECOL6</name>
<keyword id="KW-0143">Chaperone</keyword>
<keyword id="KW-0963">Cytoplasm</keyword>
<keyword id="KW-1015">Disulfide bond</keyword>
<keyword id="KW-0676">Redox-active center</keyword>
<keyword id="KW-1185">Reference proteome</keyword>
<keyword id="KW-0862">Zinc</keyword>
<protein>
    <recommendedName>
        <fullName evidence="1">33 kDa chaperonin</fullName>
    </recommendedName>
    <alternativeName>
        <fullName evidence="1">Heat shock protein 33 homolog</fullName>
        <shortName evidence="1">HSP33</shortName>
    </alternativeName>
</protein>
<organism>
    <name type="scientific">Escherichia coli O6:H1 (strain CFT073 / ATCC 700928 / UPEC)</name>
    <dbReference type="NCBI Taxonomy" id="199310"/>
    <lineage>
        <taxon>Bacteria</taxon>
        <taxon>Pseudomonadati</taxon>
        <taxon>Pseudomonadota</taxon>
        <taxon>Gammaproteobacteria</taxon>
        <taxon>Enterobacterales</taxon>
        <taxon>Enterobacteriaceae</taxon>
        <taxon>Escherichia</taxon>
    </lineage>
</organism>
<reference key="1">
    <citation type="journal article" date="2002" name="Proc. Natl. Acad. Sci. U.S.A.">
        <title>Extensive mosaic structure revealed by the complete genome sequence of uropathogenic Escherichia coli.</title>
        <authorList>
            <person name="Welch R.A."/>
            <person name="Burland V."/>
            <person name="Plunkett G. III"/>
            <person name="Redford P."/>
            <person name="Roesch P."/>
            <person name="Rasko D."/>
            <person name="Buckles E.L."/>
            <person name="Liou S.-R."/>
            <person name="Boutin A."/>
            <person name="Hackett J."/>
            <person name="Stroud D."/>
            <person name="Mayhew G.F."/>
            <person name="Rose D.J."/>
            <person name="Zhou S."/>
            <person name="Schwartz D.C."/>
            <person name="Perna N.T."/>
            <person name="Mobley H.L.T."/>
            <person name="Donnenberg M.S."/>
            <person name="Blattner F.R."/>
        </authorList>
    </citation>
    <scope>NUCLEOTIDE SEQUENCE [LARGE SCALE GENOMIC DNA]</scope>
    <source>
        <strain>CFT073 / ATCC 700928 / UPEC</strain>
    </source>
</reference>
<dbReference type="EMBL" id="AE014075">
    <property type="protein sequence ID" value="AAN82610.1"/>
    <property type="status" value="ALT_INIT"/>
    <property type="molecule type" value="Genomic_DNA"/>
</dbReference>
<dbReference type="RefSeq" id="WP_001135574.1">
    <property type="nucleotide sequence ID" value="NZ_CP051263.1"/>
</dbReference>
<dbReference type="SMR" id="P0A6Y6"/>
<dbReference type="STRING" id="199310.c4172"/>
<dbReference type="GeneID" id="93778597"/>
<dbReference type="KEGG" id="ecc:c4172"/>
<dbReference type="eggNOG" id="COG1281">
    <property type="taxonomic scope" value="Bacteria"/>
</dbReference>
<dbReference type="HOGENOM" id="CLU_054493_0_0_6"/>
<dbReference type="Proteomes" id="UP000001410">
    <property type="component" value="Chromosome"/>
</dbReference>
<dbReference type="GO" id="GO:0005737">
    <property type="term" value="C:cytoplasm"/>
    <property type="evidence" value="ECO:0007669"/>
    <property type="project" value="UniProtKB-SubCell"/>
</dbReference>
<dbReference type="GO" id="GO:0044183">
    <property type="term" value="F:protein folding chaperone"/>
    <property type="evidence" value="ECO:0007669"/>
    <property type="project" value="TreeGrafter"/>
</dbReference>
<dbReference type="GO" id="GO:0051082">
    <property type="term" value="F:unfolded protein binding"/>
    <property type="evidence" value="ECO:0007669"/>
    <property type="project" value="UniProtKB-UniRule"/>
</dbReference>
<dbReference type="GO" id="GO:0042026">
    <property type="term" value="P:protein refolding"/>
    <property type="evidence" value="ECO:0007669"/>
    <property type="project" value="TreeGrafter"/>
</dbReference>
<dbReference type="CDD" id="cd00498">
    <property type="entry name" value="Hsp33"/>
    <property type="match status" value="1"/>
</dbReference>
<dbReference type="FunFam" id="3.55.30.10:FF:000001">
    <property type="entry name" value="33 kDa chaperonin"/>
    <property type="match status" value="1"/>
</dbReference>
<dbReference type="Gene3D" id="1.10.287.480">
    <property type="entry name" value="helix hairpin bin"/>
    <property type="match status" value="1"/>
</dbReference>
<dbReference type="Gene3D" id="3.55.30.10">
    <property type="entry name" value="Hsp33 domain"/>
    <property type="match status" value="1"/>
</dbReference>
<dbReference type="Gene3D" id="3.90.1280.10">
    <property type="entry name" value="HSP33 redox switch-like"/>
    <property type="match status" value="1"/>
</dbReference>
<dbReference type="HAMAP" id="MF_00117">
    <property type="entry name" value="HslO"/>
    <property type="match status" value="1"/>
</dbReference>
<dbReference type="InterPro" id="IPR000397">
    <property type="entry name" value="Heat_shock_Hsp33"/>
</dbReference>
<dbReference type="InterPro" id="IPR016154">
    <property type="entry name" value="Heat_shock_Hsp33_C"/>
</dbReference>
<dbReference type="InterPro" id="IPR016153">
    <property type="entry name" value="Heat_shock_Hsp33_N"/>
</dbReference>
<dbReference type="InterPro" id="IPR023212">
    <property type="entry name" value="Hsp33_helix_hairpin_bin_dom_sf"/>
</dbReference>
<dbReference type="NCBIfam" id="NF001033">
    <property type="entry name" value="PRK00114.1"/>
    <property type="match status" value="1"/>
</dbReference>
<dbReference type="PANTHER" id="PTHR30111">
    <property type="entry name" value="33 KDA CHAPERONIN"/>
    <property type="match status" value="1"/>
</dbReference>
<dbReference type="PANTHER" id="PTHR30111:SF1">
    <property type="entry name" value="33 KDA CHAPERONIN"/>
    <property type="match status" value="1"/>
</dbReference>
<dbReference type="Pfam" id="PF01430">
    <property type="entry name" value="HSP33"/>
    <property type="match status" value="1"/>
</dbReference>
<dbReference type="PIRSF" id="PIRSF005261">
    <property type="entry name" value="Heat_shock_Hsp33"/>
    <property type="match status" value="1"/>
</dbReference>
<dbReference type="SUPFAM" id="SSF64397">
    <property type="entry name" value="Hsp33 domain"/>
    <property type="match status" value="1"/>
</dbReference>
<dbReference type="SUPFAM" id="SSF118352">
    <property type="entry name" value="HSP33 redox switch-like"/>
    <property type="match status" value="1"/>
</dbReference>
<accession>P0A6Y6</accession>
<accession>P45803</accession>
<proteinExistence type="inferred from homology"/>
<comment type="function">
    <text evidence="1">Redox regulated molecular chaperone. Protects both thermally unfolding and oxidatively damaged proteins from irreversible aggregation. Plays an important role in the bacterial defense system toward oxidative stress.</text>
</comment>
<comment type="subcellular location">
    <subcellularLocation>
        <location evidence="1">Cytoplasm</location>
    </subcellularLocation>
</comment>
<comment type="PTM">
    <text evidence="1">Under oxidizing conditions two disulfide bonds are formed involving the reactive cysteines. Under reducing conditions zinc is bound to the reactive cysteines and the protein is inactive.</text>
</comment>
<comment type="similarity">
    <text evidence="1">Belongs to the HSP33 family.</text>
</comment>
<comment type="sequence caution" evidence="2">
    <conflict type="erroneous initiation">
        <sequence resource="EMBL-CDS" id="AAN82610"/>
    </conflict>
</comment>
<feature type="chain" id="PRO_0000192175" description="33 kDa chaperonin">
    <location>
        <begin position="1"/>
        <end position="292"/>
    </location>
</feature>
<feature type="disulfide bond" description="Redox-active" evidence="1">
    <location>
        <begin position="230"/>
        <end position="232"/>
    </location>
</feature>
<feature type="disulfide bond" description="Redox-active" evidence="1">
    <location>
        <begin position="263"/>
        <end position="266"/>
    </location>
</feature>
<gene>
    <name evidence="1" type="primary">hslO</name>
    <name type="ordered locus">c4172</name>
</gene>